<name>THIE_CLOB6</name>
<proteinExistence type="inferred from homology"/>
<accession>C3L061</accession>
<feature type="chain" id="PRO_1000202748" description="Thiamine-phosphate synthase">
    <location>
        <begin position="1"/>
        <end position="205"/>
    </location>
</feature>
<feature type="binding site" evidence="1">
    <location>
        <begin position="37"/>
        <end position="41"/>
    </location>
    <ligand>
        <name>4-amino-2-methyl-5-(diphosphooxymethyl)pyrimidine</name>
        <dbReference type="ChEBI" id="CHEBI:57841"/>
    </ligand>
</feature>
<feature type="binding site" evidence="1">
    <location>
        <position position="69"/>
    </location>
    <ligand>
        <name>4-amino-2-methyl-5-(diphosphooxymethyl)pyrimidine</name>
        <dbReference type="ChEBI" id="CHEBI:57841"/>
    </ligand>
</feature>
<feature type="binding site" evidence="1">
    <location>
        <position position="70"/>
    </location>
    <ligand>
        <name>Mg(2+)</name>
        <dbReference type="ChEBI" id="CHEBI:18420"/>
    </ligand>
</feature>
<feature type="binding site" evidence="1">
    <location>
        <position position="89"/>
    </location>
    <ligand>
        <name>Mg(2+)</name>
        <dbReference type="ChEBI" id="CHEBI:18420"/>
    </ligand>
</feature>
<feature type="binding site" evidence="1">
    <location>
        <position position="108"/>
    </location>
    <ligand>
        <name>4-amino-2-methyl-5-(diphosphooxymethyl)pyrimidine</name>
        <dbReference type="ChEBI" id="CHEBI:57841"/>
    </ligand>
</feature>
<feature type="binding site" evidence="1">
    <location>
        <begin position="134"/>
        <end position="136"/>
    </location>
    <ligand>
        <name>2-[(2R,5Z)-2-carboxy-4-methylthiazol-5(2H)-ylidene]ethyl phosphate</name>
        <dbReference type="ChEBI" id="CHEBI:62899"/>
    </ligand>
</feature>
<feature type="binding site" evidence="1">
    <location>
        <position position="137"/>
    </location>
    <ligand>
        <name>4-amino-2-methyl-5-(diphosphooxymethyl)pyrimidine</name>
        <dbReference type="ChEBI" id="CHEBI:57841"/>
    </ligand>
</feature>
<feature type="binding site" evidence="1">
    <location>
        <position position="165"/>
    </location>
    <ligand>
        <name>2-[(2R,5Z)-2-carboxy-4-methylthiazol-5(2H)-ylidene]ethyl phosphate</name>
        <dbReference type="ChEBI" id="CHEBI:62899"/>
    </ligand>
</feature>
<feature type="binding site" evidence="1">
    <location>
        <begin position="185"/>
        <end position="186"/>
    </location>
    <ligand>
        <name>2-[(2R,5Z)-2-carboxy-4-methylthiazol-5(2H)-ylidene]ethyl phosphate</name>
        <dbReference type="ChEBI" id="CHEBI:62899"/>
    </ligand>
</feature>
<comment type="function">
    <text evidence="1">Condenses 4-methyl-5-(beta-hydroxyethyl)thiazole monophosphate (THZ-P) and 2-methyl-4-amino-5-hydroxymethyl pyrimidine pyrophosphate (HMP-PP) to form thiamine monophosphate (TMP).</text>
</comment>
<comment type="catalytic activity">
    <reaction evidence="1">
        <text>2-[(2R,5Z)-2-carboxy-4-methylthiazol-5(2H)-ylidene]ethyl phosphate + 4-amino-2-methyl-5-(diphosphooxymethyl)pyrimidine + 2 H(+) = thiamine phosphate + CO2 + diphosphate</text>
        <dbReference type="Rhea" id="RHEA:47844"/>
        <dbReference type="ChEBI" id="CHEBI:15378"/>
        <dbReference type="ChEBI" id="CHEBI:16526"/>
        <dbReference type="ChEBI" id="CHEBI:33019"/>
        <dbReference type="ChEBI" id="CHEBI:37575"/>
        <dbReference type="ChEBI" id="CHEBI:57841"/>
        <dbReference type="ChEBI" id="CHEBI:62899"/>
        <dbReference type="EC" id="2.5.1.3"/>
    </reaction>
</comment>
<comment type="catalytic activity">
    <reaction evidence="1">
        <text>2-(2-carboxy-4-methylthiazol-5-yl)ethyl phosphate + 4-amino-2-methyl-5-(diphosphooxymethyl)pyrimidine + 2 H(+) = thiamine phosphate + CO2 + diphosphate</text>
        <dbReference type="Rhea" id="RHEA:47848"/>
        <dbReference type="ChEBI" id="CHEBI:15378"/>
        <dbReference type="ChEBI" id="CHEBI:16526"/>
        <dbReference type="ChEBI" id="CHEBI:33019"/>
        <dbReference type="ChEBI" id="CHEBI:37575"/>
        <dbReference type="ChEBI" id="CHEBI:57841"/>
        <dbReference type="ChEBI" id="CHEBI:62890"/>
        <dbReference type="EC" id="2.5.1.3"/>
    </reaction>
</comment>
<comment type="catalytic activity">
    <reaction evidence="1">
        <text>4-methyl-5-(2-phosphooxyethyl)-thiazole + 4-amino-2-methyl-5-(diphosphooxymethyl)pyrimidine + H(+) = thiamine phosphate + diphosphate</text>
        <dbReference type="Rhea" id="RHEA:22328"/>
        <dbReference type="ChEBI" id="CHEBI:15378"/>
        <dbReference type="ChEBI" id="CHEBI:33019"/>
        <dbReference type="ChEBI" id="CHEBI:37575"/>
        <dbReference type="ChEBI" id="CHEBI:57841"/>
        <dbReference type="ChEBI" id="CHEBI:58296"/>
        <dbReference type="EC" id="2.5.1.3"/>
    </reaction>
</comment>
<comment type="cofactor">
    <cofactor evidence="1">
        <name>Mg(2+)</name>
        <dbReference type="ChEBI" id="CHEBI:18420"/>
    </cofactor>
    <text evidence="1">Binds 1 Mg(2+) ion per subunit.</text>
</comment>
<comment type="pathway">
    <text evidence="1">Cofactor biosynthesis; thiamine diphosphate biosynthesis; thiamine phosphate from 4-amino-2-methyl-5-diphosphomethylpyrimidine and 4-methyl-5-(2-phosphoethyl)-thiazole: step 1/1.</text>
</comment>
<comment type="similarity">
    <text evidence="1">Belongs to the thiamine-phosphate synthase family.</text>
</comment>
<evidence type="ECO:0000255" key="1">
    <source>
        <dbReference type="HAMAP-Rule" id="MF_00097"/>
    </source>
</evidence>
<gene>
    <name evidence="1" type="primary">thiE</name>
    <name type="ordered locus">CLJ_B0521</name>
</gene>
<sequence length="205" mass="22434">MEINYELYLITDRRFLKGRQLKKVVEDAILGGVTIVQVREKDVSTKEFYNVAKEVKEVTDYYRVPIIINDRLDIAQAIDANGVHLGQKDMHLNIAREILGKDKIIGISVGNVKEALEAQNNGADYLGIGTIFPTGSKKDVDAIIGIDGLSKIKDSISIPSVAIGGINKTNFKDVLKTGIEGISVISAILDEDDIKLAANNLLINK</sequence>
<dbReference type="EC" id="2.5.1.3" evidence="1"/>
<dbReference type="EMBL" id="CP001083">
    <property type="protein sequence ID" value="ACQ53399.1"/>
    <property type="molecule type" value="Genomic_DNA"/>
</dbReference>
<dbReference type="RefSeq" id="WP_003359663.1">
    <property type="nucleotide sequence ID" value="NC_012658.1"/>
</dbReference>
<dbReference type="SMR" id="C3L061"/>
<dbReference type="KEGG" id="cbi:CLJ_B0521"/>
<dbReference type="HOGENOM" id="CLU_018272_3_2_9"/>
<dbReference type="UniPathway" id="UPA00060">
    <property type="reaction ID" value="UER00141"/>
</dbReference>
<dbReference type="Proteomes" id="UP000002333">
    <property type="component" value="Chromosome"/>
</dbReference>
<dbReference type="GO" id="GO:0005737">
    <property type="term" value="C:cytoplasm"/>
    <property type="evidence" value="ECO:0007669"/>
    <property type="project" value="TreeGrafter"/>
</dbReference>
<dbReference type="GO" id="GO:0000287">
    <property type="term" value="F:magnesium ion binding"/>
    <property type="evidence" value="ECO:0007669"/>
    <property type="project" value="UniProtKB-UniRule"/>
</dbReference>
<dbReference type="GO" id="GO:0004789">
    <property type="term" value="F:thiamine-phosphate diphosphorylase activity"/>
    <property type="evidence" value="ECO:0007669"/>
    <property type="project" value="UniProtKB-UniRule"/>
</dbReference>
<dbReference type="GO" id="GO:0009228">
    <property type="term" value="P:thiamine biosynthetic process"/>
    <property type="evidence" value="ECO:0007669"/>
    <property type="project" value="UniProtKB-KW"/>
</dbReference>
<dbReference type="GO" id="GO:0009229">
    <property type="term" value="P:thiamine diphosphate biosynthetic process"/>
    <property type="evidence" value="ECO:0007669"/>
    <property type="project" value="UniProtKB-UniRule"/>
</dbReference>
<dbReference type="CDD" id="cd00564">
    <property type="entry name" value="TMP_TenI"/>
    <property type="match status" value="1"/>
</dbReference>
<dbReference type="FunFam" id="3.20.20.70:FF:000282">
    <property type="entry name" value="Thiamine-phosphate synthase"/>
    <property type="match status" value="1"/>
</dbReference>
<dbReference type="Gene3D" id="3.20.20.70">
    <property type="entry name" value="Aldolase class I"/>
    <property type="match status" value="1"/>
</dbReference>
<dbReference type="HAMAP" id="MF_00097">
    <property type="entry name" value="TMP_synthase"/>
    <property type="match status" value="1"/>
</dbReference>
<dbReference type="InterPro" id="IPR013785">
    <property type="entry name" value="Aldolase_TIM"/>
</dbReference>
<dbReference type="InterPro" id="IPR036206">
    <property type="entry name" value="ThiamineP_synth_sf"/>
</dbReference>
<dbReference type="InterPro" id="IPR022998">
    <property type="entry name" value="ThiamineP_synth_TenI"/>
</dbReference>
<dbReference type="InterPro" id="IPR034291">
    <property type="entry name" value="TMP_synthase"/>
</dbReference>
<dbReference type="NCBIfam" id="TIGR00693">
    <property type="entry name" value="thiE"/>
    <property type="match status" value="1"/>
</dbReference>
<dbReference type="PANTHER" id="PTHR20857:SF23">
    <property type="entry name" value="THIAMINE BIOSYNTHETIC BIFUNCTIONAL ENZYME"/>
    <property type="match status" value="1"/>
</dbReference>
<dbReference type="PANTHER" id="PTHR20857">
    <property type="entry name" value="THIAMINE-PHOSPHATE PYROPHOSPHORYLASE"/>
    <property type="match status" value="1"/>
</dbReference>
<dbReference type="Pfam" id="PF02581">
    <property type="entry name" value="TMP-TENI"/>
    <property type="match status" value="1"/>
</dbReference>
<dbReference type="SUPFAM" id="SSF51391">
    <property type="entry name" value="Thiamin phosphate synthase"/>
    <property type="match status" value="1"/>
</dbReference>
<reference key="1">
    <citation type="submission" date="2008-05" db="EMBL/GenBank/DDBJ databases">
        <title>Genome sequence of Clostridium botulinum Ba4 strain 657.</title>
        <authorList>
            <person name="Shrivastava S."/>
            <person name="Brown J.L."/>
            <person name="Bruce D."/>
            <person name="Detter C."/>
            <person name="Munk C."/>
            <person name="Smith L.A."/>
            <person name="Smith T.J."/>
            <person name="Sutton G."/>
            <person name="Brettin T.S."/>
        </authorList>
    </citation>
    <scope>NUCLEOTIDE SEQUENCE [LARGE SCALE GENOMIC DNA]</scope>
    <source>
        <strain>657 / Type Ba4</strain>
    </source>
</reference>
<protein>
    <recommendedName>
        <fullName evidence="1">Thiamine-phosphate synthase</fullName>
        <shortName evidence="1">TP synthase</shortName>
        <shortName evidence="1">TPS</shortName>
        <ecNumber evidence="1">2.5.1.3</ecNumber>
    </recommendedName>
    <alternativeName>
        <fullName evidence="1">Thiamine-phosphate pyrophosphorylase</fullName>
        <shortName evidence="1">TMP pyrophosphorylase</shortName>
        <shortName evidence="1">TMP-PPase</shortName>
    </alternativeName>
</protein>
<organism>
    <name type="scientific">Clostridium botulinum (strain 657 / Type Ba4)</name>
    <dbReference type="NCBI Taxonomy" id="515621"/>
    <lineage>
        <taxon>Bacteria</taxon>
        <taxon>Bacillati</taxon>
        <taxon>Bacillota</taxon>
        <taxon>Clostridia</taxon>
        <taxon>Eubacteriales</taxon>
        <taxon>Clostridiaceae</taxon>
        <taxon>Clostridium</taxon>
    </lineage>
</organism>
<keyword id="KW-0460">Magnesium</keyword>
<keyword id="KW-0479">Metal-binding</keyword>
<keyword id="KW-0784">Thiamine biosynthesis</keyword>
<keyword id="KW-0808">Transferase</keyword>